<gene>
    <name type="primary">hht1</name>
    <name type="ORF">NFIA_011720</name>
</gene>
<protein>
    <recommendedName>
        <fullName>Histone H3</fullName>
    </recommendedName>
</protein>
<sequence>MARTKQTARKSTGGKAPRKQLASKAARKAAPSTGGVKKPHRYKPGTVALREIRRYQKSTELLIRKLPFQRLVREIAQDFKSDLRFQSSAIGALQESVEAYLVSLFEDTNLCAIHAKRVTIQSKDIQLARRLRGERS</sequence>
<evidence type="ECO:0000250" key="1"/>
<evidence type="ECO:0000256" key="2">
    <source>
        <dbReference type="SAM" id="MobiDB-lite"/>
    </source>
</evidence>
<evidence type="ECO:0000305" key="3"/>
<reference key="1">
    <citation type="journal article" date="2008" name="PLoS Genet.">
        <title>Genomic islands in the pathogenic filamentous fungus Aspergillus fumigatus.</title>
        <authorList>
            <person name="Fedorova N.D."/>
            <person name="Khaldi N."/>
            <person name="Joardar V.S."/>
            <person name="Maiti R."/>
            <person name="Amedeo P."/>
            <person name="Anderson M.J."/>
            <person name="Crabtree J."/>
            <person name="Silva J.C."/>
            <person name="Badger J.H."/>
            <person name="Albarraq A."/>
            <person name="Angiuoli S."/>
            <person name="Bussey H."/>
            <person name="Bowyer P."/>
            <person name="Cotty P.J."/>
            <person name="Dyer P.S."/>
            <person name="Egan A."/>
            <person name="Galens K."/>
            <person name="Fraser-Liggett C.M."/>
            <person name="Haas B.J."/>
            <person name="Inman J.M."/>
            <person name="Kent R."/>
            <person name="Lemieux S."/>
            <person name="Malavazi I."/>
            <person name="Orvis J."/>
            <person name="Roemer T."/>
            <person name="Ronning C.M."/>
            <person name="Sundaram J.P."/>
            <person name="Sutton G."/>
            <person name="Turner G."/>
            <person name="Venter J.C."/>
            <person name="White O.R."/>
            <person name="Whitty B.R."/>
            <person name="Youngman P."/>
            <person name="Wolfe K.H."/>
            <person name="Goldman G.H."/>
            <person name="Wortman J.R."/>
            <person name="Jiang B."/>
            <person name="Denning D.W."/>
            <person name="Nierman W.C."/>
        </authorList>
    </citation>
    <scope>NUCLEOTIDE SEQUENCE [LARGE SCALE GENOMIC DNA]</scope>
    <source>
        <strain>ATCC 1020 / DSM 3700 / CBS 544.65 / FGSC A1164 / JCM 1740 / NRRL 181 / WB 181</strain>
    </source>
</reference>
<feature type="initiator methionine" description="Removed" evidence="1">
    <location>
        <position position="1"/>
    </location>
</feature>
<feature type="chain" id="PRO_0000297749" description="Histone H3">
    <location>
        <begin position="2"/>
        <end position="136"/>
    </location>
</feature>
<feature type="region of interest" description="Disordered" evidence="2">
    <location>
        <begin position="1"/>
        <end position="43"/>
    </location>
</feature>
<feature type="modified residue" description="N6,N6,N6-trimethyllysine; alternate" evidence="1">
    <location>
        <position position="5"/>
    </location>
</feature>
<feature type="modified residue" description="N6,N6-dimethyllysine; alternate" evidence="1">
    <location>
        <position position="5"/>
    </location>
</feature>
<feature type="modified residue" description="N6-methyllysine; alternate" evidence="1">
    <location>
        <position position="5"/>
    </location>
</feature>
<feature type="modified residue" description="N6-acetyllysine; alternate" evidence="1">
    <location>
        <position position="10"/>
    </location>
</feature>
<feature type="modified residue" description="N6-methyllysine; alternate" evidence="1">
    <location>
        <position position="10"/>
    </location>
</feature>
<feature type="modified residue" description="Phosphoserine" evidence="1">
    <location>
        <position position="11"/>
    </location>
</feature>
<feature type="modified residue" description="N6,N6-dimethyllysine; alternate" evidence="1">
    <location>
        <position position="15"/>
    </location>
</feature>
<feature type="modified residue" description="N6-acetyllysine; alternate" evidence="1">
    <location>
        <position position="15"/>
    </location>
</feature>
<feature type="modified residue" description="N6-acetyllysine; alternate" evidence="1">
    <location>
        <position position="19"/>
    </location>
</feature>
<feature type="modified residue" description="N6-methyllysine; alternate" evidence="1">
    <location>
        <position position="19"/>
    </location>
</feature>
<feature type="modified residue" description="N6-acetyllysine; alternate" evidence="1">
    <location>
        <position position="24"/>
    </location>
</feature>
<feature type="modified residue" description="N6-methyllysine; alternate" evidence="1">
    <location>
        <position position="24"/>
    </location>
</feature>
<feature type="modified residue" description="N6,N6,N6-trimethyllysine; alternate" evidence="1">
    <location>
        <position position="28"/>
    </location>
</feature>
<feature type="modified residue" description="N6,N6-dimethyllysine; alternate" evidence="1">
    <location>
        <position position="28"/>
    </location>
</feature>
<feature type="modified residue" description="N6-acetyllysine; alternate" evidence="1">
    <location>
        <position position="28"/>
    </location>
</feature>
<feature type="modified residue" description="N6-methyllysine; alternate" evidence="1">
    <location>
        <position position="28"/>
    </location>
</feature>
<feature type="modified residue" description="N6,N6,N6-trimethyllysine; alternate" evidence="1">
    <location>
        <position position="37"/>
    </location>
</feature>
<feature type="modified residue" description="N6,N6-dimethyllysine; alternate" evidence="1">
    <location>
        <position position="37"/>
    </location>
</feature>
<feature type="modified residue" description="N6-acetyllysine; alternate" evidence="1">
    <location>
        <position position="37"/>
    </location>
</feature>
<feature type="modified residue" description="N6-methyllysine; alternate" evidence="1">
    <location>
        <position position="37"/>
    </location>
</feature>
<feature type="modified residue" description="N6-acetyllysine" evidence="1">
    <location>
        <position position="57"/>
    </location>
</feature>
<feature type="modified residue" description="N6-acetyllysine" evidence="1">
    <location>
        <position position="65"/>
    </location>
</feature>
<feature type="modified residue" description="N6,N6,N6-trimethyllysine; alternate" evidence="1">
    <location>
        <position position="80"/>
    </location>
</feature>
<feature type="modified residue" description="N6,N6-dimethyllysine; alternate" evidence="1">
    <location>
        <position position="80"/>
    </location>
</feature>
<feature type="modified residue" description="N6-methyllysine; alternate" evidence="1">
    <location>
        <position position="80"/>
    </location>
</feature>
<comment type="function">
    <text>Core component of nucleosome. Nucleosomes wrap and compact DNA into chromatin, limiting DNA accessibility to the cellular machineries which require DNA as a template. Histones thereby play a central role in transcription regulation, DNA repair, DNA replication and chromosomal stability. DNA accessibility is regulated via a complex set of post-translational modifications of histones, also called histone code, and nucleosome remodeling.</text>
</comment>
<comment type="subunit">
    <text>The nucleosome is a histone octamer containing two molecules each of H2A, H2B, H3 and H4 assembled in one H3-H4 heterotetramer and two H2A-H2B heterodimers. The octamer wraps approximately 147 bp of DNA.</text>
</comment>
<comment type="subcellular location">
    <subcellularLocation>
        <location evidence="1">Nucleus</location>
    </subcellularLocation>
    <subcellularLocation>
        <location evidence="1">Chromosome</location>
    </subcellularLocation>
</comment>
<comment type="PTM">
    <text evidence="1">Phosphorylated to form H3S10ph. H3S10ph promotes subsequent H3K14ac formation and is required for transcriptional activation through TBP recruitment to the promoters (By similarity).</text>
</comment>
<comment type="PTM">
    <text evidence="1">Mono-, di- and trimethylated by the COMPASS complex to form H3K4me1/2/3. H3K4me activates gene expression by regulating transcription elongation and plays a role in telomere length maintenance. H3K4me enrichment correlates with transcription levels, and occurs in a 5' to 3' gradient with H3K4me3 enrichment at the 5'-end of genes, shifting to H3K4me2 and then H3K4me1. Methylated by set2 to form H3K36me. H3K36me represses gene expression. Methylated by dot1 to form H3K79me. H3K79me is required for association of SIR proteins with telomeric regions and for telomeric silencing. The COMPASS-mediated formation of H3K4me2/3 and the dot1-mediated formation of H3K79me require H2BK123ub1 (By similarity).</text>
</comment>
<comment type="PTM">
    <text evidence="1">Acetylation of histone H3 leads to transcriptional activation. H3K14ac formation by gcn5 is promoted by H3S10ph. H3K14ac can also be formed by esa1. H3K56ac formation occurs predominantly in newly synthesized H3 molecules during G1, S and G2/M of the cell cycle and may be involved in DNA repair (By similarity).</text>
</comment>
<comment type="similarity">
    <text evidence="3">Belongs to the histone H3 family.</text>
</comment>
<comment type="caution">
    <text evidence="3">To ensure consistency between histone entries, we follow the 'Brno' nomenclature for histone modifications, with positions referring to those used in the literature for the 'closest' model organism. Due to slight variations in histone sequences between organisms and to the presence of initiator methionine in UniProtKB/Swiss-Prot sequences, the actual positions of modified amino acids in the sequence generally differ. In this entry the following conventions are used: H3K4me1/2/3 = mono-, di- and trimethylated Lys-5; H3K9ac = acetylated Lys-10; H3K9me1 = monomethylated Lys-10; H3S10ph = phosphorylated Ser-11; H3K14ac = acetylated Lys-15; H3K14me2 = dimethylated Lys-15; H3K18ac = acetylated Lys-19; H3K18me1 = monomethylated Lys-19; H3K23ac = acetylated Lys-24; H3K23me1 = monomethylated Lys-24; H3K27ac = acetylated Lys-28; H3K27me1/2/3 = mono-, di- and trimethylated Lys-28; H3K36ac = acetylated Lys-37; H3K36me1/2/3 = mono-, di- and trimethylated Lys-37; H3K56ac = acetylated Lys-57; H3K64ac = acetylated Lys-65; H3K79me1/2/3 = mono-, di- and trimethylated Lys-80.</text>
</comment>
<accession>A1D240</accession>
<proteinExistence type="inferred from homology"/>
<dbReference type="EMBL" id="DS027688">
    <property type="protein sequence ID" value="EAW22483.1"/>
    <property type="molecule type" value="Genomic_DNA"/>
</dbReference>
<dbReference type="RefSeq" id="XP_001264380.1">
    <property type="nucleotide sequence ID" value="XM_001264379.1"/>
</dbReference>
<dbReference type="BMRB" id="A1D240"/>
<dbReference type="SMR" id="A1D240"/>
<dbReference type="STRING" id="331117.A1D240"/>
<dbReference type="EnsemblFungi" id="EAW22483">
    <property type="protein sequence ID" value="EAW22483"/>
    <property type="gene ID" value="NFIA_011720"/>
</dbReference>
<dbReference type="GeneID" id="4591035"/>
<dbReference type="KEGG" id="nfi:NFIA_011720"/>
<dbReference type="VEuPathDB" id="FungiDB:NFIA_011720"/>
<dbReference type="eggNOG" id="KOG1745">
    <property type="taxonomic scope" value="Eukaryota"/>
</dbReference>
<dbReference type="HOGENOM" id="CLU_078295_4_0_1"/>
<dbReference type="OMA" id="HIFAEMA"/>
<dbReference type="OrthoDB" id="842664at2759"/>
<dbReference type="Proteomes" id="UP000006702">
    <property type="component" value="Unassembled WGS sequence"/>
</dbReference>
<dbReference type="GO" id="GO:0000786">
    <property type="term" value="C:nucleosome"/>
    <property type="evidence" value="ECO:0007669"/>
    <property type="project" value="UniProtKB-KW"/>
</dbReference>
<dbReference type="GO" id="GO:0005634">
    <property type="term" value="C:nucleus"/>
    <property type="evidence" value="ECO:0007669"/>
    <property type="project" value="UniProtKB-SubCell"/>
</dbReference>
<dbReference type="GO" id="GO:0003677">
    <property type="term" value="F:DNA binding"/>
    <property type="evidence" value="ECO:0007669"/>
    <property type="project" value="UniProtKB-KW"/>
</dbReference>
<dbReference type="GO" id="GO:0046982">
    <property type="term" value="F:protein heterodimerization activity"/>
    <property type="evidence" value="ECO:0007669"/>
    <property type="project" value="InterPro"/>
</dbReference>
<dbReference type="GO" id="GO:0030527">
    <property type="term" value="F:structural constituent of chromatin"/>
    <property type="evidence" value="ECO:0007669"/>
    <property type="project" value="InterPro"/>
</dbReference>
<dbReference type="CDD" id="cd22911">
    <property type="entry name" value="HFD_H3"/>
    <property type="match status" value="1"/>
</dbReference>
<dbReference type="FunFam" id="1.10.20.10:FF:000010">
    <property type="entry name" value="Histone H3"/>
    <property type="match status" value="1"/>
</dbReference>
<dbReference type="Gene3D" id="1.10.20.10">
    <property type="entry name" value="Histone, subunit A"/>
    <property type="match status" value="1"/>
</dbReference>
<dbReference type="InterPro" id="IPR009072">
    <property type="entry name" value="Histone-fold"/>
</dbReference>
<dbReference type="InterPro" id="IPR007125">
    <property type="entry name" value="Histone_H2A/H2B/H3"/>
</dbReference>
<dbReference type="InterPro" id="IPR000164">
    <property type="entry name" value="Histone_H3/CENP-A"/>
</dbReference>
<dbReference type="PANTHER" id="PTHR11426">
    <property type="entry name" value="HISTONE H3"/>
    <property type="match status" value="1"/>
</dbReference>
<dbReference type="Pfam" id="PF00125">
    <property type="entry name" value="Histone"/>
    <property type="match status" value="1"/>
</dbReference>
<dbReference type="PRINTS" id="PR00622">
    <property type="entry name" value="HISTONEH3"/>
</dbReference>
<dbReference type="SMART" id="SM00428">
    <property type="entry name" value="H3"/>
    <property type="match status" value="1"/>
</dbReference>
<dbReference type="SUPFAM" id="SSF47113">
    <property type="entry name" value="Histone-fold"/>
    <property type="match status" value="1"/>
</dbReference>
<dbReference type="PROSITE" id="PS00322">
    <property type="entry name" value="HISTONE_H3_1"/>
    <property type="match status" value="1"/>
</dbReference>
<dbReference type="PROSITE" id="PS00959">
    <property type="entry name" value="HISTONE_H3_2"/>
    <property type="match status" value="1"/>
</dbReference>
<name>H3_NEOFI</name>
<keyword id="KW-0007">Acetylation</keyword>
<keyword id="KW-0158">Chromosome</keyword>
<keyword id="KW-0238">DNA-binding</keyword>
<keyword id="KW-0488">Methylation</keyword>
<keyword id="KW-0544">Nucleosome core</keyword>
<keyword id="KW-0539">Nucleus</keyword>
<keyword id="KW-0597">Phosphoprotein</keyword>
<keyword id="KW-1185">Reference proteome</keyword>
<organism>
    <name type="scientific">Neosartorya fischeri (strain ATCC 1020 / DSM 3700 / CBS 544.65 / FGSC A1164 / JCM 1740 / NRRL 181 / WB 181)</name>
    <name type="common">Aspergillus fischerianus</name>
    <dbReference type="NCBI Taxonomy" id="331117"/>
    <lineage>
        <taxon>Eukaryota</taxon>
        <taxon>Fungi</taxon>
        <taxon>Dikarya</taxon>
        <taxon>Ascomycota</taxon>
        <taxon>Pezizomycotina</taxon>
        <taxon>Eurotiomycetes</taxon>
        <taxon>Eurotiomycetidae</taxon>
        <taxon>Eurotiales</taxon>
        <taxon>Aspergillaceae</taxon>
        <taxon>Aspergillus</taxon>
        <taxon>Aspergillus subgen. Fumigati</taxon>
    </lineage>
</organism>